<reference key="1">
    <citation type="journal article" date="2002" name="Proc. Natl. Acad. Sci. U.S.A.">
        <title>Complete genome sequence of Clostridium perfringens, an anaerobic flesh-eater.</title>
        <authorList>
            <person name="Shimizu T."/>
            <person name="Ohtani K."/>
            <person name="Hirakawa H."/>
            <person name="Ohshima K."/>
            <person name="Yamashita A."/>
            <person name="Shiba T."/>
            <person name="Ogasawara N."/>
            <person name="Hattori M."/>
            <person name="Kuhara S."/>
            <person name="Hayashi H."/>
        </authorList>
    </citation>
    <scope>NUCLEOTIDE SEQUENCE [LARGE SCALE GENOMIC DNA]</scope>
    <source>
        <strain>13 / Type A</strain>
    </source>
</reference>
<name>DAPB_CLOPE</name>
<proteinExistence type="inferred from homology"/>
<sequence>MVKVILNGCSGKMGSVISNLAETKFPNVEIVAGIDNNTNAQRSYPIFAKPEDCNISYDVLLDFSRADALKSLVQFSKKTKKPLILCSTGYTAEDLKFIEESSKEIPLFRSANMSIGINLVNNLLKKVAPVLYENFDIELVERHHNQKVDAPSGTALLLAHTIQDSLNEETKLLYGREGIAKREKNEICVNTVRGGGIIGDHEVIFAGDGEVIEINHKAISRDVFAIGALKACEYMADKTKAGKYSMDDVLQLNF</sequence>
<organism>
    <name type="scientific">Clostridium perfringens (strain 13 / Type A)</name>
    <dbReference type="NCBI Taxonomy" id="195102"/>
    <lineage>
        <taxon>Bacteria</taxon>
        <taxon>Bacillati</taxon>
        <taxon>Bacillota</taxon>
        <taxon>Clostridia</taxon>
        <taxon>Eubacteriales</taxon>
        <taxon>Clostridiaceae</taxon>
        <taxon>Clostridium</taxon>
    </lineage>
</organism>
<gene>
    <name evidence="1" type="primary">dapB</name>
    <name type="ordered locus">CPE1906</name>
</gene>
<comment type="function">
    <text evidence="1">Catalyzes the conversion of 4-hydroxy-tetrahydrodipicolinate (HTPA) to tetrahydrodipicolinate.</text>
</comment>
<comment type="catalytic activity">
    <reaction evidence="1">
        <text>(S)-2,3,4,5-tetrahydrodipicolinate + NAD(+) + H2O = (2S,4S)-4-hydroxy-2,3,4,5-tetrahydrodipicolinate + NADH + H(+)</text>
        <dbReference type="Rhea" id="RHEA:35323"/>
        <dbReference type="ChEBI" id="CHEBI:15377"/>
        <dbReference type="ChEBI" id="CHEBI:15378"/>
        <dbReference type="ChEBI" id="CHEBI:16845"/>
        <dbReference type="ChEBI" id="CHEBI:57540"/>
        <dbReference type="ChEBI" id="CHEBI:57945"/>
        <dbReference type="ChEBI" id="CHEBI:67139"/>
        <dbReference type="EC" id="1.17.1.8"/>
    </reaction>
</comment>
<comment type="catalytic activity">
    <reaction evidence="1">
        <text>(S)-2,3,4,5-tetrahydrodipicolinate + NADP(+) + H2O = (2S,4S)-4-hydroxy-2,3,4,5-tetrahydrodipicolinate + NADPH + H(+)</text>
        <dbReference type="Rhea" id="RHEA:35331"/>
        <dbReference type="ChEBI" id="CHEBI:15377"/>
        <dbReference type="ChEBI" id="CHEBI:15378"/>
        <dbReference type="ChEBI" id="CHEBI:16845"/>
        <dbReference type="ChEBI" id="CHEBI:57783"/>
        <dbReference type="ChEBI" id="CHEBI:58349"/>
        <dbReference type="ChEBI" id="CHEBI:67139"/>
        <dbReference type="EC" id="1.17.1.8"/>
    </reaction>
</comment>
<comment type="pathway">
    <text evidence="1">Amino-acid biosynthesis; L-lysine biosynthesis via DAP pathway; (S)-tetrahydrodipicolinate from L-aspartate: step 4/4.</text>
</comment>
<comment type="subcellular location">
    <subcellularLocation>
        <location evidence="1">Cytoplasm</location>
    </subcellularLocation>
</comment>
<comment type="similarity">
    <text evidence="1">Belongs to the DapB family.</text>
</comment>
<comment type="caution">
    <text evidence="2">Was originally thought to be a dihydrodipicolinate reductase (DHDPR), catalyzing the conversion of dihydrodipicolinate to tetrahydrodipicolinate. However, it was shown in E.coli that the substrate of the enzymatic reaction is not dihydrodipicolinate (DHDP) but in fact (2S,4S)-4-hydroxy-2,3,4,5-tetrahydrodipicolinic acid (HTPA), the product released by the DapA-catalyzed reaction.</text>
</comment>
<feature type="chain" id="PRO_0000141432" description="4-hydroxy-tetrahydrodipicolinate reductase">
    <location>
        <begin position="1"/>
        <end position="254"/>
    </location>
</feature>
<feature type="active site" description="Proton donor/acceptor" evidence="1">
    <location>
        <position position="143"/>
    </location>
</feature>
<feature type="active site" description="Proton donor" evidence="1">
    <location>
        <position position="147"/>
    </location>
</feature>
<feature type="binding site" evidence="1">
    <location>
        <begin position="8"/>
        <end position="13"/>
    </location>
    <ligand>
        <name>NAD(+)</name>
        <dbReference type="ChEBI" id="CHEBI:57540"/>
    </ligand>
</feature>
<feature type="binding site" evidence="1">
    <location>
        <position position="35"/>
    </location>
    <ligand>
        <name>NAD(+)</name>
        <dbReference type="ChEBI" id="CHEBI:57540"/>
    </ligand>
</feature>
<feature type="binding site" evidence="1">
    <location>
        <begin position="86"/>
        <end position="88"/>
    </location>
    <ligand>
        <name>NAD(+)</name>
        <dbReference type="ChEBI" id="CHEBI:57540"/>
    </ligand>
</feature>
<feature type="binding site" evidence="1">
    <location>
        <begin position="110"/>
        <end position="113"/>
    </location>
    <ligand>
        <name>NAD(+)</name>
        <dbReference type="ChEBI" id="CHEBI:57540"/>
    </ligand>
</feature>
<feature type="binding site" evidence="1">
    <location>
        <position position="144"/>
    </location>
    <ligand>
        <name>(S)-2,3,4,5-tetrahydrodipicolinate</name>
        <dbReference type="ChEBI" id="CHEBI:16845"/>
    </ligand>
</feature>
<feature type="binding site" evidence="1">
    <location>
        <begin position="153"/>
        <end position="154"/>
    </location>
    <ligand>
        <name>(S)-2,3,4,5-tetrahydrodipicolinate</name>
        <dbReference type="ChEBI" id="CHEBI:16845"/>
    </ligand>
</feature>
<keyword id="KW-0028">Amino-acid biosynthesis</keyword>
<keyword id="KW-0963">Cytoplasm</keyword>
<keyword id="KW-0220">Diaminopimelate biosynthesis</keyword>
<keyword id="KW-0457">Lysine biosynthesis</keyword>
<keyword id="KW-0520">NAD</keyword>
<keyword id="KW-0521">NADP</keyword>
<keyword id="KW-0560">Oxidoreductase</keyword>
<keyword id="KW-1185">Reference proteome</keyword>
<accession>Q8XJ55</accession>
<evidence type="ECO:0000255" key="1">
    <source>
        <dbReference type="HAMAP-Rule" id="MF_00102"/>
    </source>
</evidence>
<evidence type="ECO:0000305" key="2"/>
<protein>
    <recommendedName>
        <fullName evidence="1">4-hydroxy-tetrahydrodipicolinate reductase</fullName>
        <shortName evidence="1">HTPA reductase</shortName>
        <ecNumber evidence="1">1.17.1.8</ecNumber>
    </recommendedName>
</protein>
<dbReference type="EC" id="1.17.1.8" evidence="1"/>
<dbReference type="EMBL" id="BA000016">
    <property type="protein sequence ID" value="BAB81612.1"/>
    <property type="molecule type" value="Genomic_DNA"/>
</dbReference>
<dbReference type="RefSeq" id="WP_011010671.1">
    <property type="nucleotide sequence ID" value="NC_003366.1"/>
</dbReference>
<dbReference type="SMR" id="Q8XJ55"/>
<dbReference type="STRING" id="195102.gene:10491175"/>
<dbReference type="KEGG" id="cpe:CPE1906"/>
<dbReference type="HOGENOM" id="CLU_047479_2_2_9"/>
<dbReference type="UniPathway" id="UPA00034">
    <property type="reaction ID" value="UER00018"/>
</dbReference>
<dbReference type="Proteomes" id="UP000000818">
    <property type="component" value="Chromosome"/>
</dbReference>
<dbReference type="GO" id="GO:0005829">
    <property type="term" value="C:cytosol"/>
    <property type="evidence" value="ECO:0007669"/>
    <property type="project" value="TreeGrafter"/>
</dbReference>
<dbReference type="GO" id="GO:0008839">
    <property type="term" value="F:4-hydroxy-tetrahydrodipicolinate reductase"/>
    <property type="evidence" value="ECO:0007669"/>
    <property type="project" value="UniProtKB-EC"/>
</dbReference>
<dbReference type="GO" id="GO:0051287">
    <property type="term" value="F:NAD binding"/>
    <property type="evidence" value="ECO:0007669"/>
    <property type="project" value="UniProtKB-UniRule"/>
</dbReference>
<dbReference type="GO" id="GO:0050661">
    <property type="term" value="F:NADP binding"/>
    <property type="evidence" value="ECO:0007669"/>
    <property type="project" value="UniProtKB-UniRule"/>
</dbReference>
<dbReference type="GO" id="GO:0016726">
    <property type="term" value="F:oxidoreductase activity, acting on CH or CH2 groups, NAD or NADP as acceptor"/>
    <property type="evidence" value="ECO:0007669"/>
    <property type="project" value="UniProtKB-UniRule"/>
</dbReference>
<dbReference type="GO" id="GO:0019877">
    <property type="term" value="P:diaminopimelate biosynthetic process"/>
    <property type="evidence" value="ECO:0007669"/>
    <property type="project" value="UniProtKB-UniRule"/>
</dbReference>
<dbReference type="GO" id="GO:0009089">
    <property type="term" value="P:lysine biosynthetic process via diaminopimelate"/>
    <property type="evidence" value="ECO:0007669"/>
    <property type="project" value="UniProtKB-UniRule"/>
</dbReference>
<dbReference type="CDD" id="cd02274">
    <property type="entry name" value="DHDPR_N"/>
    <property type="match status" value="1"/>
</dbReference>
<dbReference type="FunFam" id="3.30.360.10:FF:000009">
    <property type="entry name" value="4-hydroxy-tetrahydrodipicolinate reductase"/>
    <property type="match status" value="1"/>
</dbReference>
<dbReference type="Gene3D" id="3.30.360.10">
    <property type="entry name" value="Dihydrodipicolinate Reductase, domain 2"/>
    <property type="match status" value="1"/>
</dbReference>
<dbReference type="Gene3D" id="3.40.50.720">
    <property type="entry name" value="NAD(P)-binding Rossmann-like Domain"/>
    <property type="match status" value="1"/>
</dbReference>
<dbReference type="HAMAP" id="MF_00102">
    <property type="entry name" value="DapB"/>
    <property type="match status" value="1"/>
</dbReference>
<dbReference type="InterPro" id="IPR022663">
    <property type="entry name" value="DapB_C"/>
</dbReference>
<dbReference type="InterPro" id="IPR000846">
    <property type="entry name" value="DapB_N"/>
</dbReference>
<dbReference type="InterPro" id="IPR022664">
    <property type="entry name" value="DapB_N_CS"/>
</dbReference>
<dbReference type="InterPro" id="IPR023940">
    <property type="entry name" value="DHDPR_bac"/>
</dbReference>
<dbReference type="InterPro" id="IPR036291">
    <property type="entry name" value="NAD(P)-bd_dom_sf"/>
</dbReference>
<dbReference type="NCBIfam" id="TIGR00036">
    <property type="entry name" value="dapB"/>
    <property type="match status" value="1"/>
</dbReference>
<dbReference type="PANTHER" id="PTHR20836:SF7">
    <property type="entry name" value="4-HYDROXY-TETRAHYDRODIPICOLINATE REDUCTASE"/>
    <property type="match status" value="1"/>
</dbReference>
<dbReference type="PANTHER" id="PTHR20836">
    <property type="entry name" value="DIHYDRODIPICOLINATE REDUCTASE"/>
    <property type="match status" value="1"/>
</dbReference>
<dbReference type="Pfam" id="PF05173">
    <property type="entry name" value="DapB_C"/>
    <property type="match status" value="1"/>
</dbReference>
<dbReference type="Pfam" id="PF01113">
    <property type="entry name" value="DapB_N"/>
    <property type="match status" value="1"/>
</dbReference>
<dbReference type="PIRSF" id="PIRSF000161">
    <property type="entry name" value="DHPR"/>
    <property type="match status" value="1"/>
</dbReference>
<dbReference type="SUPFAM" id="SSF55347">
    <property type="entry name" value="Glyceraldehyde-3-phosphate dehydrogenase-like, C-terminal domain"/>
    <property type="match status" value="1"/>
</dbReference>
<dbReference type="SUPFAM" id="SSF51735">
    <property type="entry name" value="NAD(P)-binding Rossmann-fold domains"/>
    <property type="match status" value="1"/>
</dbReference>
<dbReference type="PROSITE" id="PS01298">
    <property type="entry name" value="DAPB"/>
    <property type="match status" value="1"/>
</dbReference>